<organism>
    <name type="scientific">Alexandromys fortis</name>
    <name type="common">Reed vole</name>
    <name type="synonym">Microtus fortis</name>
    <dbReference type="NCBI Taxonomy" id="100897"/>
    <lineage>
        <taxon>Eukaryota</taxon>
        <taxon>Metazoa</taxon>
        <taxon>Chordata</taxon>
        <taxon>Craniata</taxon>
        <taxon>Vertebrata</taxon>
        <taxon>Euteleostomi</taxon>
        <taxon>Mammalia</taxon>
        <taxon>Eutheria</taxon>
        <taxon>Euarchontoglires</taxon>
        <taxon>Glires</taxon>
        <taxon>Rodentia</taxon>
        <taxon>Myomorpha</taxon>
        <taxon>Muroidea</taxon>
        <taxon>Cricetidae</taxon>
        <taxon>Arvicolinae</taxon>
        <taxon>Alexandromys</taxon>
    </lineage>
</organism>
<sequence>MTVIRKTHPLIKMINHSFXDLPAPSNISSWWNFGSLLGLCLIIQILTGLFLAMHYTSDTTTAFSSVAHICRDVNYGWLIRYMHANGASMFFICLFLHVGRGIYYGSYNMTETWNMGVILLFAVMATAFMGYVLPWGQMSFWGATVITNLLSAIPYIGTTLVEWIWGGFSVDKATLTRFFAFHFILPFIITALVLVHLLFLHETGSNNPTGLNSDTDKIPFHPYYTIKDFLGILILLMVFMILTLFFPDILGDPDNYTPANPLNTPPHIKPEWYFLFAYAILRSIPNKLGGVLALILSILILALMPILHTSKQRALTFRPITQTMYWILVADLLILTWIGGQPVEYPFIIIGQTASIAYFTIIMILMPIAGMIENNILDLE</sequence>
<geneLocation type="mitochondrion"/>
<proteinExistence type="inferred from homology"/>
<name>CYB_ALEFO</name>
<evidence type="ECO:0000250" key="1"/>
<evidence type="ECO:0000250" key="2">
    <source>
        <dbReference type="UniProtKB" id="P00157"/>
    </source>
</evidence>
<evidence type="ECO:0000255" key="3">
    <source>
        <dbReference type="PROSITE-ProRule" id="PRU00967"/>
    </source>
</evidence>
<evidence type="ECO:0000255" key="4">
    <source>
        <dbReference type="PROSITE-ProRule" id="PRU00968"/>
    </source>
</evidence>
<keyword id="KW-0249">Electron transport</keyword>
<keyword id="KW-0349">Heme</keyword>
<keyword id="KW-0408">Iron</keyword>
<keyword id="KW-0472">Membrane</keyword>
<keyword id="KW-0479">Metal-binding</keyword>
<keyword id="KW-0496">Mitochondrion</keyword>
<keyword id="KW-0999">Mitochondrion inner membrane</keyword>
<keyword id="KW-0679">Respiratory chain</keyword>
<keyword id="KW-0812">Transmembrane</keyword>
<keyword id="KW-1133">Transmembrane helix</keyword>
<keyword id="KW-0813">Transport</keyword>
<keyword id="KW-0830">Ubiquinone</keyword>
<protein>
    <recommendedName>
        <fullName>Cytochrome b</fullName>
    </recommendedName>
    <alternativeName>
        <fullName>Complex III subunit 3</fullName>
    </alternativeName>
    <alternativeName>
        <fullName>Complex III subunit III</fullName>
    </alternativeName>
    <alternativeName>
        <fullName>Cytochrome b-c1 complex subunit 3</fullName>
    </alternativeName>
    <alternativeName>
        <fullName>Ubiquinol-cytochrome-c reductase complex cytochrome b subunit</fullName>
    </alternativeName>
</protein>
<comment type="function">
    <text evidence="2">Component of the ubiquinol-cytochrome c reductase complex (complex III or cytochrome b-c1 complex) that is part of the mitochondrial respiratory chain. The b-c1 complex mediates electron transfer from ubiquinol to cytochrome c. Contributes to the generation of a proton gradient across the mitochondrial membrane that is then used for ATP synthesis.</text>
</comment>
<comment type="cofactor">
    <cofactor evidence="2">
        <name>heme b</name>
        <dbReference type="ChEBI" id="CHEBI:60344"/>
    </cofactor>
    <text evidence="2">Binds 2 heme b groups non-covalently.</text>
</comment>
<comment type="subunit">
    <text evidence="2">The cytochrome bc1 complex contains 11 subunits: 3 respiratory subunits (MT-CYB, CYC1 and UQCRFS1), 2 core proteins (UQCRC1 and UQCRC2) and 6 low-molecular weight proteins (UQCRH/QCR6, UQCRB/QCR7, UQCRQ/QCR8, UQCR10/QCR9, UQCR11/QCR10 and a cleavage product of UQCRFS1). This cytochrome bc1 complex then forms a dimer.</text>
</comment>
<comment type="subcellular location">
    <subcellularLocation>
        <location evidence="2">Mitochondrion inner membrane</location>
        <topology evidence="2">Multi-pass membrane protein</topology>
    </subcellularLocation>
</comment>
<comment type="miscellaneous">
    <text evidence="1">Heme 1 (or BL or b562) is low-potential and absorbs at about 562 nm, and heme 2 (or BH or b566) is high-potential and absorbs at about 566 nm.</text>
</comment>
<comment type="similarity">
    <text evidence="3 4">Belongs to the cytochrome b family.</text>
</comment>
<comment type="caution">
    <text evidence="2">The full-length protein contains only eight transmembrane helices, not nine as predicted by bioinformatics tools.</text>
</comment>
<dbReference type="EMBL" id="AF163894">
    <property type="protein sequence ID" value="AAF97418.1"/>
    <property type="molecule type" value="Genomic_DNA"/>
</dbReference>
<dbReference type="GO" id="GO:0005743">
    <property type="term" value="C:mitochondrial inner membrane"/>
    <property type="evidence" value="ECO:0007669"/>
    <property type="project" value="UniProtKB-SubCell"/>
</dbReference>
<dbReference type="GO" id="GO:0045275">
    <property type="term" value="C:respiratory chain complex III"/>
    <property type="evidence" value="ECO:0007669"/>
    <property type="project" value="InterPro"/>
</dbReference>
<dbReference type="GO" id="GO:0046872">
    <property type="term" value="F:metal ion binding"/>
    <property type="evidence" value="ECO:0007669"/>
    <property type="project" value="UniProtKB-KW"/>
</dbReference>
<dbReference type="GO" id="GO:0008121">
    <property type="term" value="F:ubiquinol-cytochrome-c reductase activity"/>
    <property type="evidence" value="ECO:0007669"/>
    <property type="project" value="InterPro"/>
</dbReference>
<dbReference type="GO" id="GO:0006122">
    <property type="term" value="P:mitochondrial electron transport, ubiquinol to cytochrome c"/>
    <property type="evidence" value="ECO:0007669"/>
    <property type="project" value="TreeGrafter"/>
</dbReference>
<dbReference type="CDD" id="cd00290">
    <property type="entry name" value="cytochrome_b_C"/>
    <property type="match status" value="1"/>
</dbReference>
<dbReference type="CDD" id="cd00284">
    <property type="entry name" value="Cytochrome_b_N"/>
    <property type="match status" value="1"/>
</dbReference>
<dbReference type="FunFam" id="1.20.810.10:FF:000002">
    <property type="entry name" value="Cytochrome b"/>
    <property type="match status" value="1"/>
</dbReference>
<dbReference type="Gene3D" id="1.20.810.10">
    <property type="entry name" value="Cytochrome Bc1 Complex, Chain C"/>
    <property type="match status" value="1"/>
</dbReference>
<dbReference type="InterPro" id="IPR005798">
    <property type="entry name" value="Cyt_b/b6_C"/>
</dbReference>
<dbReference type="InterPro" id="IPR036150">
    <property type="entry name" value="Cyt_b/b6_C_sf"/>
</dbReference>
<dbReference type="InterPro" id="IPR005797">
    <property type="entry name" value="Cyt_b/b6_N"/>
</dbReference>
<dbReference type="InterPro" id="IPR027387">
    <property type="entry name" value="Cytb/b6-like_sf"/>
</dbReference>
<dbReference type="InterPro" id="IPR030689">
    <property type="entry name" value="Cytochrome_b"/>
</dbReference>
<dbReference type="InterPro" id="IPR048260">
    <property type="entry name" value="Cytochrome_b_C_euk/bac"/>
</dbReference>
<dbReference type="InterPro" id="IPR048259">
    <property type="entry name" value="Cytochrome_b_N_euk/bac"/>
</dbReference>
<dbReference type="InterPro" id="IPR016174">
    <property type="entry name" value="Di-haem_cyt_TM"/>
</dbReference>
<dbReference type="PANTHER" id="PTHR19271">
    <property type="entry name" value="CYTOCHROME B"/>
    <property type="match status" value="1"/>
</dbReference>
<dbReference type="PANTHER" id="PTHR19271:SF16">
    <property type="entry name" value="CYTOCHROME B"/>
    <property type="match status" value="1"/>
</dbReference>
<dbReference type="Pfam" id="PF00032">
    <property type="entry name" value="Cytochrom_B_C"/>
    <property type="match status" value="1"/>
</dbReference>
<dbReference type="Pfam" id="PF00033">
    <property type="entry name" value="Cytochrome_B"/>
    <property type="match status" value="1"/>
</dbReference>
<dbReference type="PIRSF" id="PIRSF038885">
    <property type="entry name" value="COB"/>
    <property type="match status" value="1"/>
</dbReference>
<dbReference type="SUPFAM" id="SSF81648">
    <property type="entry name" value="a domain/subunit of cytochrome bc1 complex (Ubiquinol-cytochrome c reductase)"/>
    <property type="match status" value="1"/>
</dbReference>
<dbReference type="SUPFAM" id="SSF81342">
    <property type="entry name" value="Transmembrane di-heme cytochromes"/>
    <property type="match status" value="1"/>
</dbReference>
<dbReference type="PROSITE" id="PS51003">
    <property type="entry name" value="CYTB_CTER"/>
    <property type="match status" value="1"/>
</dbReference>
<dbReference type="PROSITE" id="PS51002">
    <property type="entry name" value="CYTB_NTER"/>
    <property type="match status" value="1"/>
</dbReference>
<reference key="1">
    <citation type="journal article" date="2000" name="J. Mammal.">
        <title>Molecular systematics of a holarctic rodent (Microtus, Muridae).</title>
        <authorList>
            <person name="Conroy C.J."/>
            <person name="Cook J.A."/>
        </authorList>
    </citation>
    <scope>NUCLEOTIDE SEQUENCE [GENOMIC DNA]</scope>
    <source>
        <strain>Isolate #1524</strain>
    </source>
</reference>
<gene>
    <name type="primary">MT-CYB</name>
    <name type="synonym">COB</name>
    <name type="synonym">CYTB</name>
    <name type="synonym">MTCYB</name>
</gene>
<accession>Q9MI35</accession>
<feature type="chain" id="PRO_0000061181" description="Cytochrome b">
    <location>
        <begin position="1"/>
        <end position="380"/>
    </location>
</feature>
<feature type="transmembrane region" description="Helical" evidence="2">
    <location>
        <begin position="33"/>
        <end position="53"/>
    </location>
</feature>
<feature type="transmembrane region" description="Helical" evidence="2">
    <location>
        <begin position="77"/>
        <end position="98"/>
    </location>
</feature>
<feature type="transmembrane region" description="Helical" evidence="2">
    <location>
        <begin position="113"/>
        <end position="133"/>
    </location>
</feature>
<feature type="transmembrane region" description="Helical" evidence="2">
    <location>
        <begin position="178"/>
        <end position="198"/>
    </location>
</feature>
<feature type="transmembrane region" description="Helical" evidence="2">
    <location>
        <begin position="226"/>
        <end position="246"/>
    </location>
</feature>
<feature type="transmembrane region" description="Helical" evidence="2">
    <location>
        <begin position="288"/>
        <end position="308"/>
    </location>
</feature>
<feature type="transmembrane region" description="Helical" evidence="2">
    <location>
        <begin position="320"/>
        <end position="340"/>
    </location>
</feature>
<feature type="transmembrane region" description="Helical" evidence="2">
    <location>
        <begin position="347"/>
        <end position="367"/>
    </location>
</feature>
<feature type="binding site" description="axial binding residue" evidence="2">
    <location>
        <position position="83"/>
    </location>
    <ligand>
        <name>heme b</name>
        <dbReference type="ChEBI" id="CHEBI:60344"/>
        <label>b562</label>
    </ligand>
    <ligandPart>
        <name>Fe</name>
        <dbReference type="ChEBI" id="CHEBI:18248"/>
    </ligandPart>
</feature>
<feature type="binding site" description="axial binding residue" evidence="2">
    <location>
        <position position="97"/>
    </location>
    <ligand>
        <name>heme b</name>
        <dbReference type="ChEBI" id="CHEBI:60344"/>
        <label>b566</label>
    </ligand>
    <ligandPart>
        <name>Fe</name>
        <dbReference type="ChEBI" id="CHEBI:18248"/>
    </ligandPart>
</feature>
<feature type="binding site" description="axial binding residue" evidence="2">
    <location>
        <position position="182"/>
    </location>
    <ligand>
        <name>heme b</name>
        <dbReference type="ChEBI" id="CHEBI:60344"/>
        <label>b562</label>
    </ligand>
    <ligandPart>
        <name>Fe</name>
        <dbReference type="ChEBI" id="CHEBI:18248"/>
    </ligandPart>
</feature>
<feature type="binding site" description="axial binding residue" evidence="2">
    <location>
        <position position="196"/>
    </location>
    <ligand>
        <name>heme b</name>
        <dbReference type="ChEBI" id="CHEBI:60344"/>
        <label>b566</label>
    </ligand>
    <ligandPart>
        <name>Fe</name>
        <dbReference type="ChEBI" id="CHEBI:18248"/>
    </ligandPart>
</feature>
<feature type="binding site" evidence="2">
    <location>
        <position position="201"/>
    </location>
    <ligand>
        <name>a ubiquinone</name>
        <dbReference type="ChEBI" id="CHEBI:16389"/>
    </ligand>
</feature>